<organism>
    <name type="scientific">Hypocrea rufa</name>
    <name type="common">Trichoderma viride</name>
    <dbReference type="NCBI Taxonomy" id="5547"/>
    <lineage>
        <taxon>Eukaryota</taxon>
        <taxon>Fungi</taxon>
        <taxon>Dikarya</taxon>
        <taxon>Ascomycota</taxon>
        <taxon>Pezizomycotina</taxon>
        <taxon>Sordariomycetes</taxon>
        <taxon>Hypocreomycetidae</taxon>
        <taxon>Hypocreales</taxon>
        <taxon>Hypocreaceae</taxon>
        <taxon>Trichoderma</taxon>
    </lineage>
</organism>
<sequence length="417" mass="44381">MSLSNKLSITDVDVKGKRVLIRVDFNVPLDENKNITNPQRIAGAIPTIKHALDNGAKAVILMSHLGRPNGAVNAKYSLKPVVPKLEELLGKPVTFAPDCVGPEVEAIVNKADNGAVILLENLRFHIEEEGSSKDKEGNKTKADKAKVEEFRKGLTALGDVYVNDAFGTAHRAHSSMVGVDLPQKAAGFLMKKELDYFAKALESPQRPFLAILGGAKVSDKIQLIDNLLDKVNTLIICGGMAFTFKKVLDNLAIGDSLFDKAGAETVPKLVEKAKAKNVKIVLPTDFITADKFDKDANTGLATDKDGIPDGWMGLDCGDESIKLYKEAIDEAKTILWNGPAGVFEFEKFAGGTKATLDAVVEGCKNGKIVIIGGGDTATVAAKYGVEDKLSHVSTGGGASLELLEGKELPGVTALSSK</sequence>
<comment type="function">
    <text evidence="1 2 3">Catalyzes one of the two ATP producing reactions in the glycolytic pathway via the reversible conversion of 1,3-diphosphoglycerate to 3-phosphoglycerate (By similarity). Both L- and D- forms of purine and pyrimidine nucleotides can be used as substrates, but the activity is much lower on pyrimidines (By similarity). Negatively regulates the biosynthesis of acetyl-CoA from pyruvate in the mitochondrion (By similarity).</text>
</comment>
<comment type="catalytic activity">
    <reaction evidence="3">
        <text>(2R)-3-phosphoglycerate + ATP = (2R)-3-phospho-glyceroyl phosphate + ADP</text>
        <dbReference type="Rhea" id="RHEA:14801"/>
        <dbReference type="ChEBI" id="CHEBI:30616"/>
        <dbReference type="ChEBI" id="CHEBI:57604"/>
        <dbReference type="ChEBI" id="CHEBI:58272"/>
        <dbReference type="ChEBI" id="CHEBI:456216"/>
        <dbReference type="EC" id="2.7.2.3"/>
    </reaction>
</comment>
<comment type="cofactor">
    <cofactor evidence="2">
        <name>Mg(2+)</name>
        <dbReference type="ChEBI" id="CHEBI:18420"/>
    </cofactor>
</comment>
<comment type="pathway">
    <text evidence="3">Carbohydrate degradation; glycolysis; pyruvate from D-glyceraldehyde 3-phosphate: step 2/5.</text>
</comment>
<comment type="subunit">
    <text>Monomer.</text>
</comment>
<comment type="subcellular location">
    <subcellularLocation>
        <location evidence="3">Cytoplasm</location>
    </subcellularLocation>
    <subcellularLocation>
        <location evidence="3">Mitochondrion</location>
    </subcellularLocation>
</comment>
<comment type="similarity">
    <text evidence="5">Belongs to the phosphoglycerate kinase family.</text>
</comment>
<name>PGK_HYPRU</name>
<proteinExistence type="inferred from homology"/>
<keyword id="KW-0067">ATP-binding</keyword>
<keyword id="KW-0963">Cytoplasm</keyword>
<keyword id="KW-0324">Glycolysis</keyword>
<keyword id="KW-0418">Kinase</keyword>
<keyword id="KW-0460">Magnesium</keyword>
<keyword id="KW-0479">Metal-binding</keyword>
<keyword id="KW-0496">Mitochondrion</keyword>
<keyword id="KW-0547">Nucleotide-binding</keyword>
<keyword id="KW-0808">Transferase</keyword>
<evidence type="ECO:0000250" key="1">
    <source>
        <dbReference type="UniProtKB" id="A0A7G5KET3"/>
    </source>
</evidence>
<evidence type="ECO:0000250" key="2">
    <source>
        <dbReference type="UniProtKB" id="P00558"/>
    </source>
</evidence>
<evidence type="ECO:0000250" key="3">
    <source>
        <dbReference type="UniProtKB" id="P00560"/>
    </source>
</evidence>
<evidence type="ECO:0000250" key="4">
    <source>
        <dbReference type="UniProtKB" id="Q7SIB7"/>
    </source>
</evidence>
<evidence type="ECO:0000305" key="5"/>
<feature type="chain" id="PRO_0000145891" description="Phosphoglycerate kinase">
    <location>
        <begin position="1"/>
        <end position="417"/>
    </location>
</feature>
<feature type="binding site" evidence="2">
    <location>
        <position position="23"/>
    </location>
    <ligand>
        <name>(2R)-3-phosphoglycerate</name>
        <dbReference type="ChEBI" id="CHEBI:58272"/>
    </ligand>
</feature>
<feature type="binding site" evidence="4">
    <location>
        <position position="24"/>
    </location>
    <ligand>
        <name>(2R)-3-phosphoglycerate</name>
        <dbReference type="ChEBI" id="CHEBI:58272"/>
    </ligand>
</feature>
<feature type="binding site" evidence="2">
    <location>
        <position position="25"/>
    </location>
    <ligand>
        <name>(2R)-3-phosphoglycerate</name>
        <dbReference type="ChEBI" id="CHEBI:58272"/>
    </ligand>
</feature>
<feature type="binding site" evidence="4">
    <location>
        <position position="26"/>
    </location>
    <ligand>
        <name>(2R)-3-phosphoglycerate</name>
        <dbReference type="ChEBI" id="CHEBI:58272"/>
    </ligand>
</feature>
<feature type="binding site" evidence="2">
    <location>
        <position position="39"/>
    </location>
    <ligand>
        <name>(2R)-3-phosphoglycerate</name>
        <dbReference type="ChEBI" id="CHEBI:58272"/>
    </ligand>
</feature>
<feature type="binding site" evidence="4">
    <location>
        <position position="40"/>
    </location>
    <ligand>
        <name>(2R)-3-phosphoglycerate</name>
        <dbReference type="ChEBI" id="CHEBI:58272"/>
    </ligand>
</feature>
<feature type="binding site" evidence="2">
    <location>
        <position position="63"/>
    </location>
    <ligand>
        <name>(2R)-3-phosphoglycerate</name>
        <dbReference type="ChEBI" id="CHEBI:58272"/>
    </ligand>
</feature>
<feature type="binding site" evidence="4">
    <location>
        <position position="64"/>
    </location>
    <ligand>
        <name>(2R)-3-phosphoglycerate</name>
        <dbReference type="ChEBI" id="CHEBI:58272"/>
    </ligand>
</feature>
<feature type="binding site" evidence="2">
    <location>
        <position position="66"/>
    </location>
    <ligand>
        <name>(2R)-3-phosphoglycerate</name>
        <dbReference type="ChEBI" id="CHEBI:58272"/>
    </ligand>
</feature>
<feature type="binding site" evidence="4">
    <location>
        <position position="67"/>
    </location>
    <ligand>
        <name>(2R)-3-phosphoglycerate</name>
        <dbReference type="ChEBI" id="CHEBI:58272"/>
    </ligand>
</feature>
<feature type="binding site" evidence="2">
    <location>
        <position position="122"/>
    </location>
    <ligand>
        <name>(2R)-3-phosphoglycerate</name>
        <dbReference type="ChEBI" id="CHEBI:58272"/>
    </ligand>
</feature>
<feature type="binding site" evidence="4">
    <location>
        <position position="123"/>
    </location>
    <ligand>
        <name>(2R)-3-phosphoglycerate</name>
        <dbReference type="ChEBI" id="CHEBI:58272"/>
    </ligand>
</feature>
<feature type="binding site" evidence="2">
    <location>
        <position position="170"/>
    </location>
    <ligand>
        <name>(2R)-3-phosphoglycerate</name>
        <dbReference type="ChEBI" id="CHEBI:58272"/>
    </ligand>
</feature>
<feature type="binding site" evidence="4">
    <location>
        <position position="171"/>
    </location>
    <ligand>
        <name>(2R)-3-phosphoglycerate</name>
        <dbReference type="ChEBI" id="CHEBI:58272"/>
    </ligand>
</feature>
<feature type="binding site" evidence="2">
    <location>
        <position position="214"/>
    </location>
    <ligand>
        <name>ADP</name>
        <dbReference type="ChEBI" id="CHEBI:456216"/>
    </ligand>
</feature>
<feature type="binding site" evidence="2">
    <location>
        <position position="214"/>
    </location>
    <ligand>
        <name>CDP</name>
        <dbReference type="ChEBI" id="CHEBI:58069"/>
    </ligand>
</feature>
<feature type="binding site" evidence="4">
    <location>
        <position position="215"/>
    </location>
    <ligand>
        <name>AMP</name>
        <dbReference type="ChEBI" id="CHEBI:456215"/>
    </ligand>
</feature>
<feature type="binding site" evidence="4">
    <location>
        <position position="215"/>
    </location>
    <ligand>
        <name>ATP</name>
        <dbReference type="ChEBI" id="CHEBI:30616"/>
    </ligand>
</feature>
<feature type="binding site" evidence="2">
    <location>
        <position position="215"/>
    </location>
    <ligand>
        <name>Mg(2+)</name>
        <dbReference type="ChEBI" id="CHEBI:18420"/>
    </ligand>
</feature>
<feature type="binding site" evidence="4">
    <location>
        <position position="216"/>
    </location>
    <ligand>
        <name>AMP</name>
        <dbReference type="ChEBI" id="CHEBI:456215"/>
    </ligand>
</feature>
<feature type="binding site" evidence="2">
    <location>
        <position position="219"/>
    </location>
    <ligand>
        <name>CDP</name>
        <dbReference type="ChEBI" id="CHEBI:58069"/>
    </ligand>
</feature>
<feature type="binding site" evidence="2">
    <location>
        <position position="219"/>
    </location>
    <ligand>
        <name>Mg(2+)</name>
        <dbReference type="ChEBI" id="CHEBI:18420"/>
    </ligand>
</feature>
<feature type="binding site" evidence="4">
    <location>
        <position position="220"/>
    </location>
    <ligand>
        <name>AMP</name>
        <dbReference type="ChEBI" id="CHEBI:456215"/>
    </ligand>
</feature>
<feature type="binding site" evidence="4">
    <location>
        <position position="220"/>
    </location>
    <ligand>
        <name>ATP</name>
        <dbReference type="ChEBI" id="CHEBI:30616"/>
    </ligand>
</feature>
<feature type="binding site" evidence="2">
    <location>
        <position position="238"/>
    </location>
    <ligand>
        <name>ADP</name>
        <dbReference type="ChEBI" id="CHEBI:456216"/>
    </ligand>
</feature>
<feature type="binding site" evidence="2">
    <location>
        <position position="238"/>
    </location>
    <ligand>
        <name>CDP</name>
        <dbReference type="ChEBI" id="CHEBI:58069"/>
    </ligand>
</feature>
<feature type="binding site" evidence="4">
    <location>
        <position position="239"/>
    </location>
    <ligand>
        <name>AMP</name>
        <dbReference type="ChEBI" id="CHEBI:456215"/>
    </ligand>
</feature>
<feature type="binding site" evidence="4">
    <location>
        <position position="239"/>
    </location>
    <ligand>
        <name>ATP</name>
        <dbReference type="ChEBI" id="CHEBI:30616"/>
    </ligand>
</feature>
<feature type="binding site" evidence="4">
    <location>
        <position position="313"/>
    </location>
    <ligand>
        <name>AMP</name>
        <dbReference type="ChEBI" id="CHEBI:456215"/>
    </ligand>
</feature>
<feature type="binding site" evidence="4">
    <location>
        <position position="313"/>
    </location>
    <ligand>
        <name>ATP</name>
        <dbReference type="ChEBI" id="CHEBI:30616"/>
    </ligand>
</feature>
<feature type="binding site" evidence="2">
    <location>
        <position position="338"/>
    </location>
    <ligand>
        <name>CDP</name>
        <dbReference type="ChEBI" id="CHEBI:58069"/>
    </ligand>
</feature>
<feature type="binding site" evidence="2">
    <location>
        <position position="340"/>
    </location>
    <ligand>
        <name>CDP</name>
        <dbReference type="ChEBI" id="CHEBI:58069"/>
    </ligand>
</feature>
<feature type="binding site" evidence="2">
    <location>
        <position position="343"/>
    </location>
    <ligand>
        <name>ADP</name>
        <dbReference type="ChEBI" id="CHEBI:456216"/>
    </ligand>
</feature>
<feature type="binding site" evidence="2">
    <location>
        <position position="343"/>
    </location>
    <ligand>
        <name>CDP</name>
        <dbReference type="ChEBI" id="CHEBI:58069"/>
    </ligand>
</feature>
<feature type="binding site" evidence="4">
    <location>
        <position position="344"/>
    </location>
    <ligand>
        <name>AMP</name>
        <dbReference type="ChEBI" id="CHEBI:456215"/>
    </ligand>
</feature>
<feature type="binding site" evidence="4">
    <location>
        <position position="344"/>
    </location>
    <ligand>
        <name>ATP</name>
        <dbReference type="ChEBI" id="CHEBI:30616"/>
    </ligand>
</feature>
<feature type="binding site" evidence="4">
    <location>
        <position position="375"/>
    </location>
    <ligand>
        <name>ATP</name>
        <dbReference type="ChEBI" id="CHEBI:30616"/>
    </ligand>
</feature>
<feature type="binding site" evidence="4">
    <location>
        <position position="375"/>
    </location>
    <ligand>
        <name>Mg(2+)</name>
        <dbReference type="ChEBI" id="CHEBI:18420"/>
    </ligand>
</feature>
<feature type="binding site" evidence="4">
    <location>
        <position position="376"/>
    </location>
    <ligand>
        <name>ATP</name>
        <dbReference type="ChEBI" id="CHEBI:30616"/>
    </ligand>
</feature>
<feature type="sequence conflict" description="In Ref. 2." evidence="5" ref="2">
    <location>
        <begin position="24"/>
        <end position="29"/>
    </location>
</feature>
<protein>
    <recommendedName>
        <fullName>Phosphoglycerate kinase</fullName>
        <ecNumber evidence="3">2.7.2.3</ecNumber>
    </recommendedName>
</protein>
<accession>P24590</accession>
<dbReference type="EC" id="2.7.2.3" evidence="3"/>
<dbReference type="EMBL" id="X54284">
    <property type="protein sequence ID" value="CAA38181.1"/>
    <property type="molecule type" value="Genomic_DNA"/>
</dbReference>
<dbReference type="PIR" id="S13596">
    <property type="entry name" value="S13596"/>
</dbReference>
<dbReference type="PIR" id="S25381">
    <property type="entry name" value="S25381"/>
</dbReference>
<dbReference type="SMR" id="P24590"/>
<dbReference type="UniPathway" id="UPA00109">
    <property type="reaction ID" value="UER00185"/>
</dbReference>
<dbReference type="GO" id="GO:0005829">
    <property type="term" value="C:cytosol"/>
    <property type="evidence" value="ECO:0007669"/>
    <property type="project" value="TreeGrafter"/>
</dbReference>
<dbReference type="GO" id="GO:0005739">
    <property type="term" value="C:mitochondrion"/>
    <property type="evidence" value="ECO:0007669"/>
    <property type="project" value="UniProtKB-SubCell"/>
</dbReference>
<dbReference type="GO" id="GO:0043531">
    <property type="term" value="F:ADP binding"/>
    <property type="evidence" value="ECO:0007669"/>
    <property type="project" value="TreeGrafter"/>
</dbReference>
<dbReference type="GO" id="GO:0005524">
    <property type="term" value="F:ATP binding"/>
    <property type="evidence" value="ECO:0007669"/>
    <property type="project" value="UniProtKB-KW"/>
</dbReference>
<dbReference type="GO" id="GO:0046872">
    <property type="term" value="F:metal ion binding"/>
    <property type="evidence" value="ECO:0007669"/>
    <property type="project" value="UniProtKB-KW"/>
</dbReference>
<dbReference type="GO" id="GO:0004618">
    <property type="term" value="F:phosphoglycerate kinase activity"/>
    <property type="evidence" value="ECO:0007669"/>
    <property type="project" value="UniProtKB-EC"/>
</dbReference>
<dbReference type="GO" id="GO:0006094">
    <property type="term" value="P:gluconeogenesis"/>
    <property type="evidence" value="ECO:0007669"/>
    <property type="project" value="TreeGrafter"/>
</dbReference>
<dbReference type="GO" id="GO:0006096">
    <property type="term" value="P:glycolytic process"/>
    <property type="evidence" value="ECO:0007669"/>
    <property type="project" value="UniProtKB-UniPathway"/>
</dbReference>
<dbReference type="CDD" id="cd00318">
    <property type="entry name" value="Phosphoglycerate_kinase"/>
    <property type="match status" value="1"/>
</dbReference>
<dbReference type="FunFam" id="3.40.50.1260:FF:000019">
    <property type="entry name" value="Phosphoglycerate kinase 1"/>
    <property type="match status" value="1"/>
</dbReference>
<dbReference type="FunFam" id="3.40.50.1260:FF:000031">
    <property type="entry name" value="Phosphoglycerate kinase 1"/>
    <property type="match status" value="1"/>
</dbReference>
<dbReference type="Gene3D" id="3.40.50.1260">
    <property type="entry name" value="Phosphoglycerate kinase, N-terminal domain"/>
    <property type="match status" value="3"/>
</dbReference>
<dbReference type="HAMAP" id="MF_00145">
    <property type="entry name" value="Phosphoglyc_kinase"/>
    <property type="match status" value="1"/>
</dbReference>
<dbReference type="InterPro" id="IPR001576">
    <property type="entry name" value="Phosphoglycerate_kinase"/>
</dbReference>
<dbReference type="InterPro" id="IPR015911">
    <property type="entry name" value="Phosphoglycerate_kinase_CS"/>
</dbReference>
<dbReference type="InterPro" id="IPR015824">
    <property type="entry name" value="Phosphoglycerate_kinase_N"/>
</dbReference>
<dbReference type="InterPro" id="IPR036043">
    <property type="entry name" value="Phosphoglycerate_kinase_sf"/>
</dbReference>
<dbReference type="PANTHER" id="PTHR11406">
    <property type="entry name" value="PHOSPHOGLYCERATE KINASE"/>
    <property type="match status" value="1"/>
</dbReference>
<dbReference type="PANTHER" id="PTHR11406:SF0">
    <property type="entry name" value="PHOSPHOGLYCERATE KINASE"/>
    <property type="match status" value="1"/>
</dbReference>
<dbReference type="Pfam" id="PF00162">
    <property type="entry name" value="PGK"/>
    <property type="match status" value="1"/>
</dbReference>
<dbReference type="PIRSF" id="PIRSF000724">
    <property type="entry name" value="Pgk"/>
    <property type="match status" value="1"/>
</dbReference>
<dbReference type="PRINTS" id="PR00477">
    <property type="entry name" value="PHGLYCKINASE"/>
</dbReference>
<dbReference type="SUPFAM" id="SSF53748">
    <property type="entry name" value="Phosphoglycerate kinase"/>
    <property type="match status" value="1"/>
</dbReference>
<dbReference type="PROSITE" id="PS00111">
    <property type="entry name" value="PGLYCERATE_KINASE"/>
    <property type="match status" value="1"/>
</dbReference>
<gene>
    <name type="primary">pgk1</name>
    <name type="synonym">pgk</name>
</gene>
<reference key="1">
    <citation type="journal article" date="1990" name="Nucleic Acids Res.">
        <title>Sequence of the Trichoderma viride phosphoglycerate kinase gene.</title>
        <authorList>
            <person name="Goldman G.H."/>
            <person name="Villarroel R."/>
            <person name="van Montagu M."/>
            <person name="Herrera-Estrella A."/>
        </authorList>
    </citation>
    <scope>NUCLEOTIDE SEQUENCE [GENOMIC DNA]</scope>
    <source>
        <strain>T9 BR47</strain>
    </source>
</reference>
<reference key="2">
    <citation type="journal article" date="1992" name="Mol. Microbiol.">
        <title>Molecular characterization and regulation of the phosphoglycerate kinase gene from Trichoderma viride.</title>
        <authorList>
            <person name="Goldman G.H."/>
            <person name="Geremia R.A."/>
            <person name="Caplan A.B."/>
            <person name="Vila S.B."/>
            <person name="Villarroel R."/>
            <person name="van Montagu M."/>
            <person name="Herrera-Estrella A."/>
        </authorList>
    </citation>
    <scope>NUCLEOTIDE SEQUENCE [GENOMIC DNA]</scope>
    <source>
        <strain>T9 BR47</strain>
    </source>
</reference>